<feature type="initiator methionine" description="Removed" evidence="1">
    <location>
        <position position="1"/>
    </location>
</feature>
<feature type="chain" id="PRO_0000108260" description="Cytochrome c-2">
    <location>
        <begin position="2"/>
        <end position="108"/>
    </location>
</feature>
<feature type="binding site" description="covalent">
    <location>
        <position position="19"/>
    </location>
    <ligand>
        <name>heme c</name>
        <dbReference type="ChEBI" id="CHEBI:61717"/>
    </ligand>
</feature>
<feature type="binding site" description="covalent">
    <location>
        <position position="22"/>
    </location>
    <ligand>
        <name>heme c</name>
        <dbReference type="ChEBI" id="CHEBI:61717"/>
    </ligand>
</feature>
<feature type="binding site" description="axial binding residue">
    <location>
        <position position="23"/>
    </location>
    <ligand>
        <name>heme c</name>
        <dbReference type="ChEBI" id="CHEBI:61717"/>
    </ligand>
    <ligandPart>
        <name>Fe</name>
        <dbReference type="ChEBI" id="CHEBI:18248"/>
    </ligandPart>
</feature>
<feature type="binding site" description="axial binding residue">
    <location>
        <position position="85"/>
    </location>
    <ligand>
        <name>heme c</name>
        <dbReference type="ChEBI" id="CHEBI:61717"/>
    </ligand>
    <ligandPart>
        <name>Fe</name>
        <dbReference type="ChEBI" id="CHEBI:18248"/>
    </ligandPart>
</feature>
<keyword id="KW-0903">Direct protein sequencing</keyword>
<keyword id="KW-0249">Electron transport</keyword>
<keyword id="KW-0349">Heme</keyword>
<keyword id="KW-0408">Iron</keyword>
<keyword id="KW-0479">Metal-binding</keyword>
<keyword id="KW-0496">Mitochondrion</keyword>
<keyword id="KW-0679">Respiratory chain</keyword>
<keyword id="KW-0813">Transport</keyword>
<organism>
    <name type="scientific">Ceratitis capitata</name>
    <name type="common">Mediterranean fruit fly</name>
    <name type="synonym">Tephritis capitata</name>
    <dbReference type="NCBI Taxonomy" id="7213"/>
    <lineage>
        <taxon>Eukaryota</taxon>
        <taxon>Metazoa</taxon>
        <taxon>Ecdysozoa</taxon>
        <taxon>Arthropoda</taxon>
        <taxon>Hexapoda</taxon>
        <taxon>Insecta</taxon>
        <taxon>Pterygota</taxon>
        <taxon>Neoptera</taxon>
        <taxon>Endopterygota</taxon>
        <taxon>Diptera</taxon>
        <taxon>Brachycera</taxon>
        <taxon>Muscomorpha</taxon>
        <taxon>Tephritoidea</taxon>
        <taxon>Tephritidae</taxon>
        <taxon>Ceratitis</taxon>
        <taxon>Ceratitis</taxon>
    </lineage>
</organism>
<evidence type="ECO:0000269" key="1">
    <source>
    </source>
</evidence>
<evidence type="ECO:0000305" key="2"/>
<proteinExistence type="evidence at protein level"/>
<sequence length="108" mass="11735">MGVPAGDVEKGKKLFVQRCAQCHTVEAGGKHKVGPNLHGLIGRKTGQAAGFAYTDANKAKGITWNEDTLFEYLENPKKYIPGTKMIFAGLKKPNERGDLIAYLKSATK</sequence>
<protein>
    <recommendedName>
        <fullName>Cytochrome c-2</fullName>
    </recommendedName>
</protein>
<reference key="1">
    <citation type="journal article" date="1975" name="Biochim. Biophys. Acta">
        <title>Primary structure of cytochrome c from the insect Ceratitis capitata.</title>
        <authorList>
            <person name="Fernandez-Sousa J.M."/>
            <person name="Gavilanes J.G."/>
            <person name="Municio A.M."/>
            <person name="Paredes J.A."/>
            <person name="Perez-Aranda A."/>
            <person name="Rodriguez R."/>
        </authorList>
    </citation>
    <scope>PROTEIN SEQUENCE OF 2-108</scope>
</reference>
<accession>P84030</accession>
<accession>P00033</accession>
<accession>P00034</accession>
<accession>Q9VJJ3</accession>
<comment type="function">
    <text>Electron carrier protein. The oxidized form of the cytochrome c heme group can accept an electron from the heme group of the cytochrome c1 subunit of cytochrome reductase. Cytochrome c then transfers this electron to the cytochrome oxidase complex, the final protein carrier in the mitochondrial electron-transport chain.</text>
</comment>
<comment type="subcellular location">
    <subcellularLocation>
        <location>Mitochondrion intermembrane space</location>
    </subcellularLocation>
    <text>Loosely associated with the inner membrane.</text>
</comment>
<comment type="PTM">
    <text>Binds 1 heme c group covalently per subunit.</text>
</comment>
<comment type="similarity">
    <text evidence="2">Belongs to the cytochrome c family.</text>
</comment>
<comment type="online information" name="Protein Spotlight">
    <link uri="https://www.proteinspotlight.org/back_issues/076"/>
    <text>Life shuttle - Issue 76 of November 2006</text>
</comment>
<name>CYC2_CERCA</name>
<dbReference type="PIR" id="A00030">
    <property type="entry name" value="CCFFCM"/>
</dbReference>
<dbReference type="SMR" id="P84030"/>
<dbReference type="OrthoDB" id="449280at2759"/>
<dbReference type="GO" id="GO:0005758">
    <property type="term" value="C:mitochondrial intermembrane space"/>
    <property type="evidence" value="ECO:0007669"/>
    <property type="project" value="UniProtKB-SubCell"/>
</dbReference>
<dbReference type="GO" id="GO:0009055">
    <property type="term" value="F:electron transfer activity"/>
    <property type="evidence" value="ECO:0007669"/>
    <property type="project" value="InterPro"/>
</dbReference>
<dbReference type="GO" id="GO:0020037">
    <property type="term" value="F:heme binding"/>
    <property type="evidence" value="ECO:0007669"/>
    <property type="project" value="InterPro"/>
</dbReference>
<dbReference type="GO" id="GO:0046872">
    <property type="term" value="F:metal ion binding"/>
    <property type="evidence" value="ECO:0007669"/>
    <property type="project" value="UniProtKB-KW"/>
</dbReference>
<dbReference type="FunFam" id="1.10.760.10:FF:000001">
    <property type="entry name" value="Cytochrome c iso-1"/>
    <property type="match status" value="1"/>
</dbReference>
<dbReference type="Gene3D" id="1.10.760.10">
    <property type="entry name" value="Cytochrome c-like domain"/>
    <property type="match status" value="1"/>
</dbReference>
<dbReference type="InterPro" id="IPR009056">
    <property type="entry name" value="Cyt_c-like_dom"/>
</dbReference>
<dbReference type="InterPro" id="IPR036909">
    <property type="entry name" value="Cyt_c-like_dom_sf"/>
</dbReference>
<dbReference type="InterPro" id="IPR002327">
    <property type="entry name" value="Cyt_c_1A/1B"/>
</dbReference>
<dbReference type="PANTHER" id="PTHR11961">
    <property type="entry name" value="CYTOCHROME C"/>
    <property type="match status" value="1"/>
</dbReference>
<dbReference type="Pfam" id="PF00034">
    <property type="entry name" value="Cytochrom_C"/>
    <property type="match status" value="1"/>
</dbReference>
<dbReference type="PRINTS" id="PR00604">
    <property type="entry name" value="CYTCHRMECIAB"/>
</dbReference>
<dbReference type="SUPFAM" id="SSF46626">
    <property type="entry name" value="Cytochrome c"/>
    <property type="match status" value="1"/>
</dbReference>
<dbReference type="PROSITE" id="PS51007">
    <property type="entry name" value="CYTC"/>
    <property type="match status" value="1"/>
</dbReference>